<dbReference type="EMBL" id="AE009949">
    <property type="protein sequence ID" value="AAL97930.1"/>
    <property type="molecule type" value="Genomic_DNA"/>
</dbReference>
<dbReference type="RefSeq" id="WP_011017901.1">
    <property type="nucleotide sequence ID" value="NC_003485.1"/>
</dbReference>
<dbReference type="SMR" id="Q8P0J7"/>
<dbReference type="KEGG" id="spm:spyM18_1326"/>
<dbReference type="HOGENOM" id="CLU_009621_2_1_9"/>
<dbReference type="GO" id="GO:0005737">
    <property type="term" value="C:cytoplasm"/>
    <property type="evidence" value="ECO:0007669"/>
    <property type="project" value="UniProtKB-SubCell"/>
</dbReference>
<dbReference type="GO" id="GO:0009380">
    <property type="term" value="C:excinuclease repair complex"/>
    <property type="evidence" value="ECO:0007669"/>
    <property type="project" value="InterPro"/>
</dbReference>
<dbReference type="GO" id="GO:0005524">
    <property type="term" value="F:ATP binding"/>
    <property type="evidence" value="ECO:0007669"/>
    <property type="project" value="UniProtKB-UniRule"/>
</dbReference>
<dbReference type="GO" id="GO:0016887">
    <property type="term" value="F:ATP hydrolysis activity"/>
    <property type="evidence" value="ECO:0007669"/>
    <property type="project" value="InterPro"/>
</dbReference>
<dbReference type="GO" id="GO:0003677">
    <property type="term" value="F:DNA binding"/>
    <property type="evidence" value="ECO:0007669"/>
    <property type="project" value="UniProtKB-UniRule"/>
</dbReference>
<dbReference type="GO" id="GO:0009381">
    <property type="term" value="F:excinuclease ABC activity"/>
    <property type="evidence" value="ECO:0007669"/>
    <property type="project" value="UniProtKB-UniRule"/>
</dbReference>
<dbReference type="GO" id="GO:0006289">
    <property type="term" value="P:nucleotide-excision repair"/>
    <property type="evidence" value="ECO:0007669"/>
    <property type="project" value="UniProtKB-UniRule"/>
</dbReference>
<dbReference type="GO" id="GO:0009432">
    <property type="term" value="P:SOS response"/>
    <property type="evidence" value="ECO:0007669"/>
    <property type="project" value="UniProtKB-UniRule"/>
</dbReference>
<dbReference type="CDD" id="cd17916">
    <property type="entry name" value="DEXHc_UvrB"/>
    <property type="match status" value="1"/>
</dbReference>
<dbReference type="CDD" id="cd18790">
    <property type="entry name" value="SF2_C_UvrB"/>
    <property type="match status" value="1"/>
</dbReference>
<dbReference type="Gene3D" id="3.40.50.300">
    <property type="entry name" value="P-loop containing nucleotide triphosphate hydrolases"/>
    <property type="match status" value="3"/>
</dbReference>
<dbReference type="Gene3D" id="4.10.860.10">
    <property type="entry name" value="UVR domain"/>
    <property type="match status" value="1"/>
</dbReference>
<dbReference type="HAMAP" id="MF_00204">
    <property type="entry name" value="UvrB"/>
    <property type="match status" value="1"/>
</dbReference>
<dbReference type="InterPro" id="IPR006935">
    <property type="entry name" value="Helicase/UvrB_N"/>
</dbReference>
<dbReference type="InterPro" id="IPR014001">
    <property type="entry name" value="Helicase_ATP-bd"/>
</dbReference>
<dbReference type="InterPro" id="IPR001650">
    <property type="entry name" value="Helicase_C-like"/>
</dbReference>
<dbReference type="InterPro" id="IPR027417">
    <property type="entry name" value="P-loop_NTPase"/>
</dbReference>
<dbReference type="InterPro" id="IPR001943">
    <property type="entry name" value="UVR_dom"/>
</dbReference>
<dbReference type="InterPro" id="IPR036876">
    <property type="entry name" value="UVR_dom_sf"/>
</dbReference>
<dbReference type="InterPro" id="IPR004807">
    <property type="entry name" value="UvrB"/>
</dbReference>
<dbReference type="InterPro" id="IPR041471">
    <property type="entry name" value="UvrB_inter"/>
</dbReference>
<dbReference type="InterPro" id="IPR024759">
    <property type="entry name" value="UvrB_YAD/RRR_dom"/>
</dbReference>
<dbReference type="NCBIfam" id="NF003673">
    <property type="entry name" value="PRK05298.1"/>
    <property type="match status" value="1"/>
</dbReference>
<dbReference type="NCBIfam" id="TIGR00631">
    <property type="entry name" value="uvrb"/>
    <property type="match status" value="1"/>
</dbReference>
<dbReference type="PANTHER" id="PTHR24029">
    <property type="entry name" value="UVRABC SYSTEM PROTEIN B"/>
    <property type="match status" value="1"/>
</dbReference>
<dbReference type="PANTHER" id="PTHR24029:SF0">
    <property type="entry name" value="UVRABC SYSTEM PROTEIN B"/>
    <property type="match status" value="1"/>
</dbReference>
<dbReference type="Pfam" id="PF00271">
    <property type="entry name" value="Helicase_C"/>
    <property type="match status" value="1"/>
</dbReference>
<dbReference type="Pfam" id="PF04851">
    <property type="entry name" value="ResIII"/>
    <property type="match status" value="1"/>
</dbReference>
<dbReference type="Pfam" id="PF02151">
    <property type="entry name" value="UVR"/>
    <property type="match status" value="1"/>
</dbReference>
<dbReference type="Pfam" id="PF12344">
    <property type="entry name" value="UvrB"/>
    <property type="match status" value="1"/>
</dbReference>
<dbReference type="Pfam" id="PF17757">
    <property type="entry name" value="UvrB_inter"/>
    <property type="match status" value="1"/>
</dbReference>
<dbReference type="SMART" id="SM00487">
    <property type="entry name" value="DEXDc"/>
    <property type="match status" value="1"/>
</dbReference>
<dbReference type="SMART" id="SM00490">
    <property type="entry name" value="HELICc"/>
    <property type="match status" value="1"/>
</dbReference>
<dbReference type="SUPFAM" id="SSF46600">
    <property type="entry name" value="C-terminal UvrC-binding domain of UvrB"/>
    <property type="match status" value="1"/>
</dbReference>
<dbReference type="SUPFAM" id="SSF52540">
    <property type="entry name" value="P-loop containing nucleoside triphosphate hydrolases"/>
    <property type="match status" value="2"/>
</dbReference>
<dbReference type="PROSITE" id="PS51192">
    <property type="entry name" value="HELICASE_ATP_BIND_1"/>
    <property type="match status" value="1"/>
</dbReference>
<dbReference type="PROSITE" id="PS51194">
    <property type="entry name" value="HELICASE_CTER"/>
    <property type="match status" value="1"/>
</dbReference>
<dbReference type="PROSITE" id="PS50151">
    <property type="entry name" value="UVR"/>
    <property type="match status" value="1"/>
</dbReference>
<keyword id="KW-0067">ATP-binding</keyword>
<keyword id="KW-0963">Cytoplasm</keyword>
<keyword id="KW-0227">DNA damage</keyword>
<keyword id="KW-0228">DNA excision</keyword>
<keyword id="KW-0234">DNA repair</keyword>
<keyword id="KW-0267">Excision nuclease</keyword>
<keyword id="KW-0547">Nucleotide-binding</keyword>
<keyword id="KW-0742">SOS response</keyword>
<feature type="chain" id="PRO_0000138437" description="UvrABC system protein B">
    <location>
        <begin position="1"/>
        <end position="663"/>
    </location>
</feature>
<feature type="domain" description="Helicase ATP-binding" evidence="1">
    <location>
        <begin position="31"/>
        <end position="418"/>
    </location>
</feature>
<feature type="domain" description="Helicase C-terminal" evidence="1">
    <location>
        <begin position="435"/>
        <end position="597"/>
    </location>
</feature>
<feature type="domain" description="UVR" evidence="1">
    <location>
        <begin position="627"/>
        <end position="662"/>
    </location>
</feature>
<feature type="region of interest" description="Disordered" evidence="2">
    <location>
        <begin position="1"/>
        <end position="23"/>
    </location>
</feature>
<feature type="short sequence motif" description="Beta-hairpin">
    <location>
        <begin position="97"/>
        <end position="120"/>
    </location>
</feature>
<feature type="compositionally biased region" description="Basic and acidic residues" evidence="2">
    <location>
        <begin position="1"/>
        <end position="10"/>
    </location>
</feature>
<feature type="binding site" evidence="1">
    <location>
        <begin position="44"/>
        <end position="51"/>
    </location>
    <ligand>
        <name>ATP</name>
        <dbReference type="ChEBI" id="CHEBI:30616"/>
    </ligand>
</feature>
<name>UVRB_STRP8</name>
<gene>
    <name evidence="1" type="primary">uvrB</name>
    <name type="ordered locus">spyM18_1326</name>
</gene>
<sequence>MIDKRDDKPFKLKSKYKPSGDQPQAIESLVDNIEGGEKAQILLGATGTGKTYTMSQVISKVNKPTLVIAHNKTLAGQLYGEFKEFFPDNAVEYFVSYYDYYQPEAYVPSSDTYIEKDSSVNDEIDKLRHSATSSLLERNDVIVVASVSCIYGLGSPKEYADSAVSLRPGQEISRDTLLNQLVDIQFERNDIDFQRGCFRVRGDVVEVFPASRDEHAFRVEFFGDEIDRICEIESLTGKTIGEVDHLVLFPATHFVTNDEHMEQSIAKIQAELAEQLQLFESEGKLLEAQRLRQRTEYDIEMLREMGYTSGVENYSRHMDGRSPGEPPYTLLDFFPEDFLIMIDESHMTMGQIKGMYNGDQARKQMLVDYGFRLPSALDNRPLRRKEFESHVHQIVYVSATPGEYEMSQTNTIIEQIIRPTGLLDPEIDVRPSMGQMDDLLGEINQRVARDERTFITTLTKKMAEDLTDYLKEMGVKVKYMHSDIKTLERTEIIRDLRLGVFDVLIGINLLREGIDVPEVSLVAILDADKEGFLRNERGLIQTIGRAARNVDGHVIMYADKMTDSMQRAIDETARRREIQIAYNKAHGIVPQTIKKDIRGFISISKTSHNDISKEEMDYESMSRGERKEAINALQKQMQEAAELLDFELAAQMRDLILELKLMD</sequence>
<protein>
    <recommendedName>
        <fullName evidence="1">UvrABC system protein B</fullName>
        <shortName evidence="1">Protein UvrB</shortName>
    </recommendedName>
    <alternativeName>
        <fullName evidence="1">Excinuclease ABC subunit B</fullName>
    </alternativeName>
</protein>
<proteinExistence type="inferred from homology"/>
<accession>Q8P0J7</accession>
<evidence type="ECO:0000255" key="1">
    <source>
        <dbReference type="HAMAP-Rule" id="MF_00204"/>
    </source>
</evidence>
<evidence type="ECO:0000256" key="2">
    <source>
        <dbReference type="SAM" id="MobiDB-lite"/>
    </source>
</evidence>
<organism>
    <name type="scientific">Streptococcus pyogenes serotype M18 (strain MGAS8232)</name>
    <dbReference type="NCBI Taxonomy" id="186103"/>
    <lineage>
        <taxon>Bacteria</taxon>
        <taxon>Bacillati</taxon>
        <taxon>Bacillota</taxon>
        <taxon>Bacilli</taxon>
        <taxon>Lactobacillales</taxon>
        <taxon>Streptococcaceae</taxon>
        <taxon>Streptococcus</taxon>
    </lineage>
</organism>
<comment type="function">
    <text evidence="1">The UvrABC repair system catalyzes the recognition and processing of DNA lesions. A damage recognition complex composed of 2 UvrA and 2 UvrB subunits scans DNA for abnormalities. Upon binding of the UvrA(2)B(2) complex to a putative damaged site, the DNA wraps around one UvrB monomer. DNA wrap is dependent on ATP binding by UvrB and probably causes local melting of the DNA helix, facilitating insertion of UvrB beta-hairpin between the DNA strands. Then UvrB probes one DNA strand for the presence of a lesion. If a lesion is found the UvrA subunits dissociate and the UvrB-DNA preincision complex is formed. This complex is subsequently bound by UvrC and the second UvrB is released. If no lesion is found, the DNA wraps around the other UvrB subunit that will check the other stand for damage.</text>
</comment>
<comment type="subunit">
    <text evidence="1">Forms a heterotetramer with UvrA during the search for lesions. Interacts with UvrC in an incision complex.</text>
</comment>
<comment type="subcellular location">
    <subcellularLocation>
        <location evidence="1">Cytoplasm</location>
    </subcellularLocation>
</comment>
<comment type="domain">
    <text evidence="1">The beta-hairpin motif is involved in DNA binding.</text>
</comment>
<comment type="similarity">
    <text evidence="1">Belongs to the UvrB family.</text>
</comment>
<reference key="1">
    <citation type="journal article" date="2002" name="Proc. Natl. Acad. Sci. U.S.A.">
        <title>Genome sequence and comparative microarray analysis of serotype M18 group A Streptococcus strains associated with acute rheumatic fever outbreaks.</title>
        <authorList>
            <person name="Smoot J.C."/>
            <person name="Barbian K.D."/>
            <person name="Van Gompel J.J."/>
            <person name="Smoot L.M."/>
            <person name="Chaussee M.S."/>
            <person name="Sylva G.L."/>
            <person name="Sturdevant D.E."/>
            <person name="Ricklefs S.M."/>
            <person name="Porcella S.F."/>
            <person name="Parkins L.D."/>
            <person name="Beres S.B."/>
            <person name="Campbell D.S."/>
            <person name="Smith T.M."/>
            <person name="Zhang Q."/>
            <person name="Kapur V."/>
            <person name="Daly J.A."/>
            <person name="Veasy L.G."/>
            <person name="Musser J.M."/>
        </authorList>
    </citation>
    <scope>NUCLEOTIDE SEQUENCE [LARGE SCALE GENOMIC DNA]</scope>
    <source>
        <strain>MGAS8232</strain>
    </source>
</reference>